<dbReference type="EMBL" id="D28488">
    <property type="protein sequence ID" value="BAA05849.1"/>
    <property type="molecule type" value="Genomic_RNA"/>
</dbReference>
<dbReference type="SMR" id="Q66141"/>
<dbReference type="GO" id="GO:1990904">
    <property type="term" value="C:ribonucleoprotein complex"/>
    <property type="evidence" value="ECO:0007669"/>
    <property type="project" value="UniProtKB-KW"/>
</dbReference>
<dbReference type="GO" id="GO:0039617">
    <property type="term" value="C:T=3 icosahedral viral capsid"/>
    <property type="evidence" value="ECO:0007669"/>
    <property type="project" value="UniProtKB-KW"/>
</dbReference>
<dbReference type="GO" id="GO:0019013">
    <property type="term" value="C:viral nucleocapsid"/>
    <property type="evidence" value="ECO:0007669"/>
    <property type="project" value="UniProtKB-KW"/>
</dbReference>
<dbReference type="GO" id="GO:0003723">
    <property type="term" value="F:RNA binding"/>
    <property type="evidence" value="ECO:0007669"/>
    <property type="project" value="UniProtKB-KW"/>
</dbReference>
<dbReference type="GO" id="GO:0005198">
    <property type="term" value="F:structural molecule activity"/>
    <property type="evidence" value="ECO:0007669"/>
    <property type="project" value="InterPro"/>
</dbReference>
<dbReference type="Gene3D" id="2.60.120.530">
    <property type="entry name" value="Cucumovirus coat protein, subunit A"/>
    <property type="match status" value="1"/>
</dbReference>
<dbReference type="InterPro" id="IPR000247">
    <property type="entry name" value="Cucumovirus_coat"/>
</dbReference>
<dbReference type="InterPro" id="IPR037137">
    <property type="entry name" value="Cucumovirus_coat_Asu_sf"/>
</dbReference>
<dbReference type="Pfam" id="PF00760">
    <property type="entry name" value="Cucumo_coat"/>
    <property type="match status" value="1"/>
</dbReference>
<dbReference type="PRINTS" id="PR00222">
    <property type="entry name" value="CUCUMOCOAT"/>
</dbReference>
<dbReference type="SUPFAM" id="SSF88633">
    <property type="entry name" value="Positive stranded ssRNA viruses"/>
    <property type="match status" value="1"/>
</dbReference>
<evidence type="ECO:0000250" key="1"/>
<evidence type="ECO:0000256" key="2">
    <source>
        <dbReference type="SAM" id="MobiDB-lite"/>
    </source>
</evidence>
<evidence type="ECO:0000305" key="3"/>
<keyword id="KW-0007">Acetylation</keyword>
<keyword id="KW-0167">Capsid protein</keyword>
<keyword id="KW-0687">Ribonucleoprotein</keyword>
<keyword id="KW-0694">RNA-binding</keyword>
<keyword id="KW-1142">T=3 icosahedral capsid protein</keyword>
<keyword id="KW-0543">Viral nucleoprotein</keyword>
<keyword id="KW-0946">Virion</keyword>
<proteinExistence type="inferred from homology"/>
<name>CAPSD_CMVPE</name>
<organismHost>
    <name type="scientific">Cucumis sativus</name>
    <name type="common">Cucumber</name>
    <dbReference type="NCBI Taxonomy" id="3659"/>
</organismHost>
<organismHost>
    <name type="scientific">Solanum lycopersicum</name>
    <name type="common">Tomato</name>
    <name type="synonym">Lycopersicon esculentum</name>
    <dbReference type="NCBI Taxonomy" id="4081"/>
</organismHost>
<organismHost>
    <name type="scientific">Spinacia oleracea</name>
    <name type="common">Spinach</name>
    <dbReference type="NCBI Taxonomy" id="3562"/>
</organismHost>
<comment type="function">
    <text evidence="1">Capsid protein. Probably binds RNA and plays a role in packaging (By similarity).</text>
</comment>
<comment type="subcellular location">
    <subcellularLocation>
        <location evidence="3">Virion</location>
    </subcellularLocation>
</comment>
<comment type="domain">
    <text evidence="1">The N-terminal arginine-rich stretch does not seem to be the major RNA-binding region that allows formation of an infectious ribonucleoprotein complex.</text>
</comment>
<comment type="similarity">
    <text evidence="3">Belongs to the cucumovirus capsid protein family.</text>
</comment>
<reference key="1">
    <citation type="journal article" date="1996" name="Nihon Shokubutsu Byori Gakkaiho">
        <title>Six new subgroup I members of Japanese cucumber mosaic virus as determined by nucleotide sequence analysis on RNA3's cDNAs.</title>
        <authorList>
            <person name="Chaumpluk P."/>
            <person name="Sasaki Y."/>
            <person name="Nakajima N."/>
            <person name="Nagano H."/>
            <person name="Nakamura I."/>
            <person name="Suzuki K."/>
            <person name="Mise K."/>
            <person name="Inouye N."/>
            <person name="Okuno T."/>
            <person name="Furusawa I."/>
        </authorList>
    </citation>
    <scope>NUCLEOTIDE SEQUENCE [GENOMIC RNA]</scope>
</reference>
<accession>Q66141</accession>
<sequence>MDKSESTGAGRNRRRRPRRGSRSAPSSADANFRVLSQQLSRLNKTLAAGRPTINHPTFVGSERCKPGYTFTSITLKPPKIDRESYYGKRLLLPDSVTEYDKKLVSRIQIRVNPLPKFDSTVWVTVRKVPASSDLSVAAISAMFADGASPVLVYQYAASGVQANNKLLYDLSAMRADIGDMRKYAVLVYSKDDTLETDELVLHVDVEHQRIPTSGVLPV</sequence>
<protein>
    <recommendedName>
        <fullName>Capsid protein</fullName>
        <shortName>CP</shortName>
    </recommendedName>
    <alternativeName>
        <fullName>Coat protein</fullName>
    </alternativeName>
</protein>
<gene>
    <name type="ORF">ORF3b</name>
</gene>
<organism>
    <name type="scientific">Cucumber mosaic virus (strain Pepo)</name>
    <name type="common">CMV</name>
    <dbReference type="NCBI Taxonomy" id="117125"/>
    <lineage>
        <taxon>Viruses</taxon>
        <taxon>Riboviria</taxon>
        <taxon>Orthornavirae</taxon>
        <taxon>Kitrinoviricota</taxon>
        <taxon>Alsuviricetes</taxon>
        <taxon>Martellivirales</taxon>
        <taxon>Bromoviridae</taxon>
        <taxon>Cucumovirus</taxon>
        <taxon>Cucumber mosaic virus</taxon>
    </lineage>
</organism>
<feature type="chain" id="PRO_0000083217" description="Capsid protein">
    <location>
        <begin position="1"/>
        <end position="218"/>
    </location>
</feature>
<feature type="region of interest" description="Disordered" evidence="2">
    <location>
        <begin position="1"/>
        <end position="28"/>
    </location>
</feature>
<feature type="compositionally biased region" description="Basic residues" evidence="2">
    <location>
        <begin position="11"/>
        <end position="21"/>
    </location>
</feature>
<feature type="modified residue" description="N-acetylmethionine; by host" evidence="1">
    <location>
        <position position="1"/>
    </location>
</feature>